<accession>Q4FNM8</accession>
<keyword id="KW-0963">Cytoplasm</keyword>
<keyword id="KW-1185">Reference proteome</keyword>
<keyword id="KW-0690">Ribosome biogenesis</keyword>
<reference key="1">
    <citation type="journal article" date="2005" name="Science">
        <title>Genome streamlining in a cosmopolitan oceanic bacterium.</title>
        <authorList>
            <person name="Giovannoni S.J."/>
            <person name="Tripp H.J."/>
            <person name="Givan S."/>
            <person name="Podar M."/>
            <person name="Vergin K.L."/>
            <person name="Baptista D."/>
            <person name="Bibbs L."/>
            <person name="Eads J."/>
            <person name="Richardson T.H."/>
            <person name="Noordewier M."/>
            <person name="Rappe M.S."/>
            <person name="Short J.M."/>
            <person name="Carrington J.C."/>
            <person name="Mathur E.J."/>
        </authorList>
    </citation>
    <scope>NUCLEOTIDE SEQUENCE [LARGE SCALE GENOMIC DNA]</scope>
    <source>
        <strain>HTCC1062</strain>
    </source>
</reference>
<gene>
    <name evidence="1" type="primary">rbfA</name>
    <name type="ordered locus">SAR11_0390</name>
</gene>
<proteinExistence type="inferred from homology"/>
<evidence type="ECO:0000255" key="1">
    <source>
        <dbReference type="HAMAP-Rule" id="MF_00003"/>
    </source>
</evidence>
<organism>
    <name type="scientific">Pelagibacter ubique (strain HTCC1062)</name>
    <dbReference type="NCBI Taxonomy" id="335992"/>
    <lineage>
        <taxon>Bacteria</taxon>
        <taxon>Pseudomonadati</taxon>
        <taxon>Pseudomonadota</taxon>
        <taxon>Alphaproteobacteria</taxon>
        <taxon>Candidatus Pelagibacterales</taxon>
        <taxon>Candidatus Pelagibacteraceae</taxon>
        <taxon>Candidatus Pelagibacter</taxon>
    </lineage>
</organism>
<sequence>MADRIGKPVSQRQLRVGEMIRQSLGMIFARNEAKVPNLETNTITVTEVKMSQDLKIAKAYVLPLGGKDSELVIKKLKECSFLIRKALSKKIIMKYLPKILFAKDDSFEYAEKIENLIKQTNK</sequence>
<comment type="function">
    <text evidence="1">One of several proteins that assist in the late maturation steps of the functional core of the 30S ribosomal subunit. Associates with free 30S ribosomal subunits (but not with 30S subunits that are part of 70S ribosomes or polysomes). Required for efficient processing of 16S rRNA. May interact with the 5'-terminal helix region of 16S rRNA.</text>
</comment>
<comment type="subunit">
    <text evidence="1">Monomer. Binds 30S ribosomal subunits, but not 50S ribosomal subunits or 70S ribosomes.</text>
</comment>
<comment type="subcellular location">
    <subcellularLocation>
        <location evidence="1">Cytoplasm</location>
    </subcellularLocation>
</comment>
<comment type="similarity">
    <text evidence="1">Belongs to the RbfA family.</text>
</comment>
<feature type="chain" id="PRO_0000321237" description="Ribosome-binding factor A">
    <location>
        <begin position="1"/>
        <end position="122"/>
    </location>
</feature>
<protein>
    <recommendedName>
        <fullName evidence="1">Ribosome-binding factor A</fullName>
    </recommendedName>
</protein>
<dbReference type="EMBL" id="CP000084">
    <property type="protein sequence ID" value="AAZ21211.1"/>
    <property type="molecule type" value="Genomic_DNA"/>
</dbReference>
<dbReference type="RefSeq" id="WP_011281675.1">
    <property type="nucleotide sequence ID" value="NC_007205.1"/>
</dbReference>
<dbReference type="SMR" id="Q4FNM8"/>
<dbReference type="STRING" id="335992.SAR11_0390"/>
<dbReference type="GeneID" id="66294887"/>
<dbReference type="KEGG" id="pub:SAR11_0390"/>
<dbReference type="eggNOG" id="COG0858">
    <property type="taxonomic scope" value="Bacteria"/>
</dbReference>
<dbReference type="HOGENOM" id="CLU_089475_1_0_5"/>
<dbReference type="OrthoDB" id="9805051at2"/>
<dbReference type="Proteomes" id="UP000002528">
    <property type="component" value="Chromosome"/>
</dbReference>
<dbReference type="GO" id="GO:0005829">
    <property type="term" value="C:cytosol"/>
    <property type="evidence" value="ECO:0007669"/>
    <property type="project" value="TreeGrafter"/>
</dbReference>
<dbReference type="GO" id="GO:0043024">
    <property type="term" value="F:ribosomal small subunit binding"/>
    <property type="evidence" value="ECO:0007669"/>
    <property type="project" value="TreeGrafter"/>
</dbReference>
<dbReference type="GO" id="GO:0030490">
    <property type="term" value="P:maturation of SSU-rRNA"/>
    <property type="evidence" value="ECO:0007669"/>
    <property type="project" value="UniProtKB-UniRule"/>
</dbReference>
<dbReference type="Gene3D" id="3.30.300.20">
    <property type="match status" value="1"/>
</dbReference>
<dbReference type="HAMAP" id="MF_00003">
    <property type="entry name" value="RbfA"/>
    <property type="match status" value="1"/>
</dbReference>
<dbReference type="InterPro" id="IPR015946">
    <property type="entry name" value="KH_dom-like_a/b"/>
</dbReference>
<dbReference type="InterPro" id="IPR000238">
    <property type="entry name" value="RbfA"/>
</dbReference>
<dbReference type="InterPro" id="IPR023799">
    <property type="entry name" value="RbfA_dom_sf"/>
</dbReference>
<dbReference type="NCBIfam" id="TIGR00082">
    <property type="entry name" value="rbfA"/>
    <property type="match status" value="1"/>
</dbReference>
<dbReference type="PANTHER" id="PTHR33515">
    <property type="entry name" value="RIBOSOME-BINDING FACTOR A, CHLOROPLASTIC-RELATED"/>
    <property type="match status" value="1"/>
</dbReference>
<dbReference type="PANTHER" id="PTHR33515:SF1">
    <property type="entry name" value="RIBOSOME-BINDING FACTOR A, CHLOROPLASTIC-RELATED"/>
    <property type="match status" value="1"/>
</dbReference>
<dbReference type="Pfam" id="PF02033">
    <property type="entry name" value="RBFA"/>
    <property type="match status" value="1"/>
</dbReference>
<dbReference type="SUPFAM" id="SSF89919">
    <property type="entry name" value="Ribosome-binding factor A, RbfA"/>
    <property type="match status" value="1"/>
</dbReference>
<name>RBFA_PELUB</name>